<reference key="1">
    <citation type="journal article" date="2009" name="PLoS Biol.">
        <title>Lineage-specific biology revealed by a finished genome assembly of the mouse.</title>
        <authorList>
            <person name="Church D.M."/>
            <person name="Goodstadt L."/>
            <person name="Hillier L.W."/>
            <person name="Zody M.C."/>
            <person name="Goldstein S."/>
            <person name="She X."/>
            <person name="Bult C.J."/>
            <person name="Agarwala R."/>
            <person name="Cherry J.L."/>
            <person name="DiCuccio M."/>
            <person name="Hlavina W."/>
            <person name="Kapustin Y."/>
            <person name="Meric P."/>
            <person name="Maglott D."/>
            <person name="Birtle Z."/>
            <person name="Marques A.C."/>
            <person name="Graves T."/>
            <person name="Zhou S."/>
            <person name="Teague B."/>
            <person name="Potamousis K."/>
            <person name="Churas C."/>
            <person name="Place M."/>
            <person name="Herschleb J."/>
            <person name="Runnheim R."/>
            <person name="Forrest D."/>
            <person name="Amos-Landgraf J."/>
            <person name="Schwartz D.C."/>
            <person name="Cheng Z."/>
            <person name="Lindblad-Toh K."/>
            <person name="Eichler E.E."/>
            <person name="Ponting C.P."/>
        </authorList>
    </citation>
    <scope>NUCLEOTIDE SEQUENCE [LARGE SCALE GENOMIC DNA]</scope>
    <source>
        <strain>C57BL/6J</strain>
    </source>
</reference>
<reference key="2">
    <citation type="journal article" date="2002" name="Am. J. Physiol.">
        <title>AE4 is a DIDS-sensitive Cl(-)/HCO(-)(3) exchanger in the basolateral membrane of the renal CCD and the SMG duct.</title>
        <authorList>
            <person name="Ko S.B.H."/>
            <person name="Luo X."/>
            <person name="Hager H."/>
            <person name="Rojek A."/>
            <person name="Choi J.Y."/>
            <person name="Licht C."/>
            <person name="Suzuki M."/>
            <person name="Muallem S."/>
            <person name="Nielsen S."/>
            <person name="Ishibashi K."/>
        </authorList>
    </citation>
    <scope>SUBCELLULAR LOCATION</scope>
    <source>
        <tissue>Kidney</tissue>
    </source>
</reference>
<reference key="3">
    <citation type="journal article" date="2007" name="Am. J. Physiol.">
        <title>PAT-1 (Slc26a6) is the predominant apical membrane Cl-/HCO3-exchanger in the upper villous epithelium of the murine duodenum.</title>
        <authorList>
            <person name="Simpson J.E."/>
            <person name="Schweinfest C.W."/>
            <person name="Shull G.E."/>
            <person name="Gawenis L.R."/>
            <person name="Walker N.M."/>
            <person name="Boyle K.T."/>
            <person name="Soleimani M."/>
            <person name="Clarke L.L."/>
        </authorList>
    </citation>
    <scope>FUNCTION</scope>
</reference>
<reference key="4">
    <citation type="journal article" date="2013" name="Proc. Natl. Acad. Sci. U.S.A.">
        <title>Renal intercalated cells are rather energized by a proton than a sodium pump.</title>
        <authorList>
            <person name="Chambrey R."/>
            <person name="Kurth I."/>
            <person name="Peti-Peterdi J."/>
            <person name="Houillier P."/>
            <person name="Purkerson J.M."/>
            <person name="Leviel F."/>
            <person name="Hentschke M."/>
            <person name="Zdebik A.A."/>
            <person name="Schwartz G.J."/>
            <person name="Huebner C.A."/>
            <person name="Eladari D."/>
        </authorList>
    </citation>
    <scope>CAUTION</scope>
    <scope>TISSUE SPECIFICITY</scope>
    <scope>SUBCELLULAR LOCATION</scope>
    <scope>DISRUPTION PHENOTYPE</scope>
</reference>
<reference key="5">
    <citation type="journal article" date="2015" name="J. Biol. Chem.">
        <title>Ae4 (Slc4a9) Anion Exchanger Drives Cl- Uptake-dependent Fluid Secretion by Mouse Submandibular Gland Acinar Cells.</title>
        <authorList>
            <person name="Pena-Muenzenmayer G."/>
            <person name="Catalan M.A."/>
            <person name="Kondo Y."/>
            <person name="Jaramillo Y."/>
            <person name="Liu F."/>
            <person name="Shull G.E."/>
            <person name="Melvin J.E."/>
        </authorList>
    </citation>
    <scope>FUNCTION</scope>
    <scope>TRANSPORTER ACTIVITY</scope>
</reference>
<reference key="6">
    <citation type="journal article" date="2016" name="J. Gen. Physiol.">
        <title>Ae4 (Slc4a9) is an electroneutral monovalent cation-dependent Cl-/HCO3- exchanger.</title>
        <authorList>
            <person name="Pena-Muenzenmayer G."/>
            <person name="George A.T."/>
            <person name="Shull G.E."/>
            <person name="Melvin J.E."/>
            <person name="Catalan M.A."/>
        </authorList>
    </citation>
    <scope>FUNCTION</scope>
    <scope>TRANSPORTER ACTIVITY</scope>
</reference>
<reference key="7">
    <citation type="journal article" date="2021" name="Am. J. Physiol.">
        <title>Activation of the Ae4 (Slc4a9) cation-driven Cl-/HCO3- exchanger by the cAMP-dependent protein kinase in salivary gland acinar cells.</title>
        <authorList>
            <person name="Pena-Muenzenmayer G."/>
            <person name="Kondo Y."/>
            <person name="Salinas C."/>
            <person name="Sarmiento J."/>
            <person name="Brauchi S."/>
            <person name="Catalan M.A."/>
        </authorList>
    </citation>
    <scope>FUNCTION</scope>
    <scope>TRANSPORTER ACTIVITY</scope>
    <scope>ACTIVITY REGULATION</scope>
    <scope>SUBCELLULAR LOCATION</scope>
    <scope>MUTAGENESIS OF SER-173 AND SER-273</scope>
</reference>
<proteinExistence type="evidence at protein level"/>
<sequence>MKLPGQGDFESSDAHENAHSEEPDSGLGPGPGLNGPSGIDIGESQVSKDPLLFIQLNELLGWPQALEWRETGRWLLFEEKLDMGAGRWSAPHVPTLELPSLQKLRSLLAEGIVLLDCQAQSLLELVEQVVSGESLSPELRGQLQALLLQRPQHHIQTMGIRPCRESNAFRKASRDEDAPLKHQNPLRQKLPAGAEAAAVLAGELGFLEQPLGAFVRLRNPIVLEPLTEMILPSRFFCLLLGPPTLGRSYHEMGRAAAVLLSDPQFQWSVRRASHLPDLLAALDAFLQEVTALPPGRWDRTARIPPPKYLPSQHKRFPSKLQEVTSLSRQSAALAEDKHHHGPHTPIPELQRTGRLFGGLIQDVRRKACWYTSDFLDALHPQCFSAVFYIYLATVTNAITFGGLLGDATEGAQGVLESFLGTAVAGAAFCLMAGQPLTILSSTGPVLVFERLLFSFSRDYSLDYLPFRLWVGIWVTAFCLALVATEASLLVRYFTRFTEEGFCALISLIFIYDAMGKMLNLIRAYPIQRPGSSAYGCFCQYPGTGGNTSEWTSAKLKDTEDILSVPGLVNASFLPPPECIRQGGHPLGPSCHTVPDIAFFSLLLFFTSFLCAIALKHIKNSRFFPSVVRKVLGDFSSVLAILLGCGLDTFLGLATPKLLVPTEFKPTLSGRGWLVSPFGANPWWLSVAAALPALLLSILIFMDQQITAVILNRAEYRLQKGAGFHLDLFCVAVLMLFTSALGLPWYVSATVISLAHIDSLRRESKACIPGEAPNFLGIREQRLTGLVVFVLTGVSIFLAPVLKFIPMPVLYGIFLYMGVAALSSIQFVKRVQLLLMPRKHQPDMLLLRHVPLSRVHLFTAIQLACLGLLWVVKSTPAAIVFPLMLLGLVAIRKALEWVFSPQELLWLDELMPEEEETIPENRSEPEHLFSGNDSEDSELMYQPKAPEINISVN</sequence>
<feature type="chain" id="PRO_0000458413" description="Anion exchange protein 4">
    <location>
        <begin position="1"/>
        <end position="952"/>
    </location>
</feature>
<feature type="transmembrane region" description="Helical" evidence="1">
    <location>
        <begin position="385"/>
        <end position="405"/>
    </location>
</feature>
<feature type="transmembrane region" description="Helical" evidence="1">
    <location>
        <begin position="413"/>
        <end position="433"/>
    </location>
</feature>
<feature type="transmembrane region" description="Helical" evidence="1">
    <location>
        <begin position="470"/>
        <end position="490"/>
    </location>
</feature>
<feature type="transmembrane region" description="Helical" evidence="1">
    <location>
        <begin position="501"/>
        <end position="521"/>
    </location>
</feature>
<feature type="transmembrane region" description="Helical" evidence="1">
    <location>
        <begin position="593"/>
        <end position="613"/>
    </location>
</feature>
<feature type="transmembrane region" description="Helical" evidence="1">
    <location>
        <begin position="634"/>
        <end position="654"/>
    </location>
</feature>
<feature type="transmembrane region" description="Helical" evidence="1">
    <location>
        <begin position="681"/>
        <end position="701"/>
    </location>
</feature>
<feature type="transmembrane region" description="Helical" evidence="1">
    <location>
        <begin position="727"/>
        <end position="747"/>
    </location>
</feature>
<feature type="transmembrane region" description="Helical" evidence="1">
    <location>
        <begin position="784"/>
        <end position="804"/>
    </location>
</feature>
<feature type="transmembrane region" description="Helical" evidence="1">
    <location>
        <begin position="807"/>
        <end position="827"/>
    </location>
</feature>
<feature type="transmembrane region" description="Helical" evidence="1">
    <location>
        <begin position="870"/>
        <end position="890"/>
    </location>
</feature>
<feature type="region of interest" description="Disordered" evidence="2">
    <location>
        <begin position="1"/>
        <end position="41"/>
    </location>
</feature>
<feature type="region of interest" description="Disordered" evidence="2">
    <location>
        <begin position="915"/>
        <end position="938"/>
    </location>
</feature>
<feature type="compositionally biased region" description="Basic and acidic residues" evidence="2">
    <location>
        <begin position="12"/>
        <end position="22"/>
    </location>
</feature>
<feature type="glycosylation site" description="N-linked (GlcNAc...) asparagine" evidence="1">
    <location>
        <position position="546"/>
    </location>
</feature>
<feature type="glycosylation site" description="N-linked (GlcNAc...) asparagine" evidence="1">
    <location>
        <position position="569"/>
    </location>
</feature>
<feature type="glycosylation site" description="N-linked (GlcNAc...) asparagine" evidence="1">
    <location>
        <position position="920"/>
    </location>
</feature>
<feature type="glycosylation site" description="N-linked (GlcNAc...) asparagine" evidence="1">
    <location>
        <position position="931"/>
    </location>
</feature>
<feature type="glycosylation site" description="N-linked (GlcNAc...) asparagine" evidence="1">
    <location>
        <position position="948"/>
    </location>
</feature>
<feature type="mutagenesis site" description="Significantly decreases Cl(-)/HCO3(-) antiporter activity. Does not affect plasma membrane localization. Abolishes PKA-mediated Cl(-)/HCO3(-) antiporter activity." evidence="8">
    <original>S</original>
    <variation>A</variation>
    <location>
        <position position="173"/>
    </location>
</feature>
<feature type="mutagenesis site" description="Significantly decreases Cl(-)/HCO3(-) antiporter activity. Does not affect plasma membrane localization. Does not affect PKA-mediated Cl(-)/HCO3(-) antiporter activity." evidence="8">
    <original>S</original>
    <variation>A</variation>
    <location>
        <position position="273"/>
    </location>
</feature>
<accession>A0A494BA31</accession>
<protein>
    <recommendedName>
        <fullName evidence="10">Anion exchange protein 4</fullName>
        <shortName>AE 4</shortName>
        <shortName>Anion exchanger 4</shortName>
    </recommendedName>
    <alternativeName>
        <fullName>Solute carrier family 4 member 9</fullName>
    </alternativeName>
</protein>
<evidence type="ECO:0000255" key="1"/>
<evidence type="ECO:0000256" key="2">
    <source>
        <dbReference type="SAM" id="MobiDB-lite"/>
    </source>
</evidence>
<evidence type="ECO:0000269" key="3">
    <source>
    </source>
</evidence>
<evidence type="ECO:0000269" key="4">
    <source>
    </source>
</evidence>
<evidence type="ECO:0000269" key="5">
    <source>
    </source>
</evidence>
<evidence type="ECO:0000269" key="6">
    <source>
    </source>
</evidence>
<evidence type="ECO:0000269" key="7">
    <source>
    </source>
</evidence>
<evidence type="ECO:0000269" key="8">
    <source>
    </source>
</evidence>
<evidence type="ECO:0000303" key="9">
    <source>
    </source>
</evidence>
<evidence type="ECO:0000305" key="10"/>
<evidence type="ECO:0000305" key="11">
    <source>
    </source>
</evidence>
<evidence type="ECO:0000305" key="12">
    <source>
    </source>
</evidence>
<evidence type="ECO:0000312" key="13">
    <source>
        <dbReference type="MGI" id="MGI:2443384"/>
    </source>
</evidence>
<comment type="function">
    <text evidence="4 6 7">Electroneutral Cl(-)/HCO3(-) antiporter that favors chloride ion entry and efflux of hydrogencarbonate and sodium ion across the basolateral membrane and may participate in salivary secretion (PubMed:25745107, PubMed:27114614). Also mediates Cl(-)/HCO3(-) exchange activity in the presence of K(+) as well as Cs(+), Li(+), and Rb(+) (PubMed:27114614). Does not contribute to Cl(-)/HCO3(-) exchanger in the apical membrane of the upper villous epithelium (PubMed:17170027).</text>
</comment>
<comment type="catalytic activity">
    <reaction evidence="6 7">
        <text>2 hydrogencarbonate(out) + chloride(in) + Na(+)(out) = 2 hydrogencarbonate(in) + chloride(out) + Na(+)(in)</text>
        <dbReference type="Rhea" id="RHEA:72739"/>
        <dbReference type="ChEBI" id="CHEBI:17544"/>
        <dbReference type="ChEBI" id="CHEBI:17996"/>
        <dbReference type="ChEBI" id="CHEBI:29101"/>
    </reaction>
</comment>
<comment type="catalytic activity">
    <reaction evidence="7">
        <text>K(+)(in) + 2 hydrogencarbonate(in) + chloride(out) = K(+)(out) + 2 hydrogencarbonate(out) + chloride(in)</text>
        <dbReference type="Rhea" id="RHEA:75059"/>
        <dbReference type="ChEBI" id="CHEBI:17544"/>
        <dbReference type="ChEBI" id="CHEBI:17996"/>
        <dbReference type="ChEBI" id="CHEBI:29103"/>
    </reaction>
</comment>
<comment type="catalytic activity">
    <reaction evidence="7">
        <text>Li(+)(in) + 2 hydrogencarbonate(in) + chloride(out) = Li(+)(out) + 2 hydrogencarbonate(out) + chloride(in)</text>
        <dbReference type="Rhea" id="RHEA:75063"/>
        <dbReference type="ChEBI" id="CHEBI:17544"/>
        <dbReference type="ChEBI" id="CHEBI:17996"/>
        <dbReference type="ChEBI" id="CHEBI:49713"/>
    </reaction>
</comment>
<comment type="catalytic activity">
    <reaction evidence="7">
        <text>Rb(+)(in) + 2 hydrogencarbonate(in) + chloride(out) = Rb(+)(out) + 2 hydrogencarbonate(out) + chloride(in)</text>
        <dbReference type="Rhea" id="RHEA:75067"/>
        <dbReference type="ChEBI" id="CHEBI:17544"/>
        <dbReference type="ChEBI" id="CHEBI:17996"/>
        <dbReference type="ChEBI" id="CHEBI:49847"/>
    </reaction>
</comment>
<comment type="catalytic activity">
    <reaction evidence="7">
        <text>Cs(+)(in) + 2 hydrogencarbonate(in) + chloride(out) = Cs(+)(out) + 2 hydrogencarbonate(out) + chloride(in)</text>
        <dbReference type="Rhea" id="RHEA:75071"/>
        <dbReference type="ChEBI" id="CHEBI:17544"/>
        <dbReference type="ChEBI" id="CHEBI:17996"/>
        <dbReference type="ChEBI" id="CHEBI:49547"/>
    </reaction>
</comment>
<comment type="activity regulation">
    <text evidence="8">Cl(-)/HCO3(-) exchanger activity is substantially increased in response to 5 uM isoproterenol (PubMed:34585968). Cl(-)/HCO3(-) exchanger activity is increased by both forskolin and coexpression with the catalytic subunit alpha of PKA (PubMed:34585968).</text>
</comment>
<comment type="subcellular location">
    <subcellularLocation>
        <location evidence="3 5 12">Basolateral cell membrane</location>
        <topology evidence="1">Multi-pass membrane protein</topology>
    </subcellularLocation>
    <text evidence="3 5">Localized in the basolateral membrane of the cortical collecting duct (CCD)and submandibular gland (SMG) duct.</text>
</comment>
<comment type="tissue specificity">
    <text evidence="3 4 5">Expressed in submandibular gland (SMG) duct and cortical collecting duct (CCD) of kidney (PubMed:12225984, PubMed:23610411). Lower expressed in duodenal villi (PubMed:17170027).</text>
</comment>
<comment type="disruption phenotype">
    <text evidence="5">Homozygous mice lacking the Slc4a9 gene have no obvious phenotypical abnormalities.</text>
</comment>
<comment type="similarity">
    <text evidence="10">Belongs to the anion exchanger (TC 2.A.31) family.</text>
</comment>
<comment type="caution">
    <text evidence="5 11">Chambrey et al. shows that the transport mechanism differs in renal cells and suggests that SLC4A9 is a Na(+)/HCO3(-) cotransporter in mouse kidney beta-intercalated cells (PubMed:23610411). However the stoichiometry is not defined and the role of chloride ions is not clear.</text>
</comment>
<organism>
    <name type="scientific">Mus musculus</name>
    <name type="common">Mouse</name>
    <dbReference type="NCBI Taxonomy" id="10090"/>
    <lineage>
        <taxon>Eukaryota</taxon>
        <taxon>Metazoa</taxon>
        <taxon>Chordata</taxon>
        <taxon>Craniata</taxon>
        <taxon>Vertebrata</taxon>
        <taxon>Euteleostomi</taxon>
        <taxon>Mammalia</taxon>
        <taxon>Eutheria</taxon>
        <taxon>Euarchontoglires</taxon>
        <taxon>Glires</taxon>
        <taxon>Rodentia</taxon>
        <taxon>Myomorpha</taxon>
        <taxon>Muroidea</taxon>
        <taxon>Muridae</taxon>
        <taxon>Murinae</taxon>
        <taxon>Mus</taxon>
        <taxon>Mus</taxon>
    </lineage>
</organism>
<name>B3A4_MOUSE</name>
<gene>
    <name evidence="13" type="primary">Slc4a9</name>
    <name evidence="9" type="synonym">AE4</name>
</gene>
<dbReference type="EMBL" id="AC147220">
    <property type="status" value="NOT_ANNOTATED_CDS"/>
    <property type="molecule type" value="Genomic_DNA"/>
</dbReference>
<dbReference type="EMBL" id="AC115631">
    <property type="status" value="NOT_ANNOTATED_CDS"/>
    <property type="molecule type" value="Genomic_DNA"/>
</dbReference>
<dbReference type="CCDS" id="CCDS89223.1"/>
<dbReference type="RefSeq" id="NP_001258473.1">
    <property type="nucleotide sequence ID" value="NM_001271544.1"/>
</dbReference>
<dbReference type="SMR" id="A0A494BA31"/>
<dbReference type="FunCoup" id="A0A494BA31">
    <property type="interactions" value="38"/>
</dbReference>
<dbReference type="GlyGen" id="A0A494BA31">
    <property type="glycosylation" value="5 sites"/>
</dbReference>
<dbReference type="iPTMnet" id="A0A494BA31"/>
<dbReference type="PhosphoSitePlus" id="A0A494BA31"/>
<dbReference type="Antibodypedia" id="62629">
    <property type="antibodies" value="111 antibodies from 20 providers"/>
</dbReference>
<dbReference type="DNASU" id="240215"/>
<dbReference type="Ensembl" id="ENSMUST00000236124.2">
    <property type="protein sequence ID" value="ENSMUSP00000157862.2"/>
    <property type="gene ID" value="ENSMUSG00000024485.17"/>
</dbReference>
<dbReference type="GeneID" id="240215"/>
<dbReference type="KEGG" id="mmu:240215"/>
<dbReference type="AGR" id="MGI:2443384"/>
<dbReference type="CTD" id="83697"/>
<dbReference type="MGI" id="MGI:2443384">
    <property type="gene designation" value="Slc4a9"/>
</dbReference>
<dbReference type="VEuPathDB" id="HostDB:ENSMUSG00000024485"/>
<dbReference type="GeneTree" id="ENSGT00940000160970"/>
<dbReference type="InParanoid" id="A0A494BA31"/>
<dbReference type="OMA" id="GEMPPIT"/>
<dbReference type="OrthoDB" id="1735926at2759"/>
<dbReference type="Reactome" id="R-MMU-425381">
    <property type="pathway name" value="Bicarbonate transporters"/>
</dbReference>
<dbReference type="ChiTaRS" id="Slc4a9">
    <property type="organism name" value="mouse"/>
</dbReference>
<dbReference type="PRO" id="PR:A0A494BA31"/>
<dbReference type="Proteomes" id="UP000000589">
    <property type="component" value="Chromosome 18"/>
</dbReference>
<dbReference type="Bgee" id="ENSMUSG00000024485">
    <property type="expression patterns" value="Expressed in right kidney and 35 other cell types or tissues"/>
</dbReference>
<dbReference type="ExpressionAtlas" id="A0A494BA31">
    <property type="expression patterns" value="baseline and differential"/>
</dbReference>
<dbReference type="GO" id="GO:0045177">
    <property type="term" value="C:apical part of cell"/>
    <property type="evidence" value="ECO:0000314"/>
    <property type="project" value="MGI"/>
</dbReference>
<dbReference type="GO" id="GO:0016323">
    <property type="term" value="C:basolateral plasma membrane"/>
    <property type="evidence" value="ECO:0000314"/>
    <property type="project" value="UniProtKB"/>
</dbReference>
<dbReference type="GO" id="GO:0016020">
    <property type="term" value="C:membrane"/>
    <property type="evidence" value="ECO:0000314"/>
    <property type="project" value="MGI"/>
</dbReference>
<dbReference type="GO" id="GO:0022853">
    <property type="term" value="F:active monoatomic ion transmembrane transporter activity"/>
    <property type="evidence" value="ECO:0007669"/>
    <property type="project" value="UniProtKB-ARBA"/>
</dbReference>
<dbReference type="GO" id="GO:0140900">
    <property type="term" value="F:chloride:bicarbonate antiporter activity"/>
    <property type="evidence" value="ECO:0000315"/>
    <property type="project" value="UniProtKB"/>
</dbReference>
<dbReference type="GO" id="GO:0140892">
    <property type="term" value="F:sodium,bicarbonate:chloride antiporter activity"/>
    <property type="evidence" value="ECO:0000314"/>
    <property type="project" value="UniProtKB"/>
</dbReference>
<dbReference type="GO" id="GO:0008510">
    <property type="term" value="F:sodium:bicarbonate symporter activity"/>
    <property type="evidence" value="ECO:0000315"/>
    <property type="project" value="UniProtKB"/>
</dbReference>
<dbReference type="GO" id="GO:0046541">
    <property type="term" value="P:saliva secretion"/>
    <property type="evidence" value="ECO:0000315"/>
    <property type="project" value="UniProtKB"/>
</dbReference>
<dbReference type="GO" id="GO:0035725">
    <property type="term" value="P:sodium ion transmembrane transport"/>
    <property type="evidence" value="ECO:0000250"/>
    <property type="project" value="UniProtKB"/>
</dbReference>
<dbReference type="FunFam" id="1.10.287.570:FF:000001">
    <property type="entry name" value="Anion exchange protein"/>
    <property type="match status" value="1"/>
</dbReference>
<dbReference type="FunFam" id="3.40.930.10:FF:000011">
    <property type="entry name" value="Anion exchange protein 4"/>
    <property type="match status" value="1"/>
</dbReference>
<dbReference type="Gene3D" id="1.10.287.570">
    <property type="entry name" value="Helical hairpin bin"/>
    <property type="match status" value="1"/>
</dbReference>
<dbReference type="Gene3D" id="3.40.930.10">
    <property type="entry name" value="Mannitol-specific EII, Chain A"/>
    <property type="match status" value="1"/>
</dbReference>
<dbReference type="InterPro" id="IPR013769">
    <property type="entry name" value="Band3_cytoplasmic_dom"/>
</dbReference>
<dbReference type="InterPro" id="IPR011531">
    <property type="entry name" value="HCO3_transpt-like_TM_dom"/>
</dbReference>
<dbReference type="InterPro" id="IPR003020">
    <property type="entry name" value="HCO3_transpt_euk"/>
</dbReference>
<dbReference type="InterPro" id="IPR003024">
    <property type="entry name" value="Na/HCO3_transpt"/>
</dbReference>
<dbReference type="InterPro" id="IPR016152">
    <property type="entry name" value="PTrfase/Anion_transptr"/>
</dbReference>
<dbReference type="NCBIfam" id="TIGR00834">
    <property type="entry name" value="ae"/>
    <property type="match status" value="1"/>
</dbReference>
<dbReference type="PANTHER" id="PTHR11453">
    <property type="entry name" value="ANION EXCHANGE PROTEIN"/>
    <property type="match status" value="1"/>
</dbReference>
<dbReference type="PANTHER" id="PTHR11453:SF52">
    <property type="entry name" value="ANION EXCHANGE PROTEIN 4"/>
    <property type="match status" value="1"/>
</dbReference>
<dbReference type="Pfam" id="PF07565">
    <property type="entry name" value="Band_3_cyto"/>
    <property type="match status" value="2"/>
</dbReference>
<dbReference type="Pfam" id="PF00955">
    <property type="entry name" value="HCO3_cotransp"/>
    <property type="match status" value="1"/>
</dbReference>
<dbReference type="PRINTS" id="PR01231">
    <property type="entry name" value="HCO3TRNSPORT"/>
</dbReference>
<dbReference type="PRINTS" id="PR01232">
    <property type="entry name" value="NAHCO3TRSPRT"/>
</dbReference>
<dbReference type="SUPFAM" id="SSF55804">
    <property type="entry name" value="Phoshotransferase/anion transport protein"/>
    <property type="match status" value="1"/>
</dbReference>
<keyword id="KW-1003">Cell membrane</keyword>
<keyword id="KW-0325">Glycoprotein</keyword>
<keyword id="KW-0406">Ion transport</keyword>
<keyword id="KW-0472">Membrane</keyword>
<keyword id="KW-1185">Reference proteome</keyword>
<keyword id="KW-0915">Sodium</keyword>
<keyword id="KW-0739">Sodium transport</keyword>
<keyword id="KW-0812">Transmembrane</keyword>
<keyword id="KW-1133">Transmembrane helix</keyword>
<keyword id="KW-0813">Transport</keyword>